<keyword id="KW-0002">3D-structure</keyword>
<keyword id="KW-0963">Cytoplasm</keyword>
<keyword id="KW-0488">Methylation</keyword>
<keyword id="KW-0648">Protein biosynthesis</keyword>
<comment type="function">
    <text evidence="1">Peptide chain release factor 1 directs the termination of translation in response to the peptide chain termination codons UAG and UAA.</text>
</comment>
<comment type="subcellular location">
    <subcellularLocation>
        <location evidence="1">Cytoplasm</location>
    </subcellularLocation>
</comment>
<comment type="PTM">
    <text evidence="1">Methylated by PrmC. Methylation increases the termination efficiency of RF1.</text>
</comment>
<comment type="similarity">
    <text evidence="1">Belongs to the prokaryotic/mitochondrial release factor family.</text>
</comment>
<feature type="chain" id="PRO_0000263382" description="Peptide chain release factor 1">
    <location>
        <begin position="1"/>
        <end position="354"/>
    </location>
</feature>
<feature type="modified residue" description="N5-methylglutamine" evidence="1">
    <location>
        <position position="230"/>
    </location>
</feature>
<feature type="helix" evidence="2">
    <location>
        <begin position="2"/>
        <end position="8"/>
    </location>
</feature>
<feature type="helix" evidence="2">
    <location>
        <begin position="10"/>
        <end position="18"/>
    </location>
</feature>
<feature type="turn" evidence="2">
    <location>
        <begin position="22"/>
        <end position="25"/>
    </location>
</feature>
<feature type="helix" evidence="2">
    <location>
        <begin position="28"/>
        <end position="62"/>
    </location>
</feature>
<feature type="helix" evidence="2">
    <location>
        <begin position="68"/>
        <end position="96"/>
    </location>
</feature>
<feature type="strand" evidence="2">
    <location>
        <begin position="107"/>
        <end position="113"/>
    </location>
</feature>
<feature type="helix" evidence="2">
    <location>
        <begin position="117"/>
        <end position="138"/>
    </location>
</feature>
<feature type="strand" evidence="2">
    <location>
        <begin position="141"/>
        <end position="149"/>
    </location>
</feature>
<feature type="strand" evidence="2">
    <location>
        <begin position="153"/>
        <end position="164"/>
    </location>
</feature>
<feature type="helix" evidence="2">
    <location>
        <begin position="167"/>
        <end position="171"/>
    </location>
</feature>
<feature type="helix" evidence="2">
    <location>
        <begin position="172"/>
        <end position="174"/>
    </location>
</feature>
<feature type="strand" evidence="2">
    <location>
        <begin position="176"/>
        <end position="182"/>
    </location>
</feature>
<feature type="strand" evidence="2">
    <location>
        <begin position="193"/>
        <end position="203"/>
    </location>
</feature>
<feature type="helix" evidence="2">
    <location>
        <begin position="214"/>
        <end position="216"/>
    </location>
</feature>
<feature type="strand" evidence="2">
    <location>
        <begin position="217"/>
        <end position="222"/>
    </location>
</feature>
<feature type="helix" evidence="2">
    <location>
        <begin position="229"/>
        <end position="234"/>
    </location>
</feature>
<feature type="strand" evidence="2">
    <location>
        <begin position="238"/>
        <end position="243"/>
    </location>
</feature>
<feature type="turn" evidence="2">
    <location>
        <begin position="244"/>
        <end position="246"/>
    </location>
</feature>
<feature type="strand" evidence="2">
    <location>
        <begin position="249"/>
        <end position="252"/>
    </location>
</feature>
<feature type="helix" evidence="2">
    <location>
        <begin position="258"/>
        <end position="292"/>
    </location>
</feature>
<feature type="helix" evidence="2">
    <location>
        <begin position="295"/>
        <end position="298"/>
    </location>
</feature>
<feature type="strand" evidence="2">
    <location>
        <begin position="301"/>
        <end position="306"/>
    </location>
</feature>
<feature type="turn" evidence="2">
    <location>
        <begin position="307"/>
        <end position="310"/>
    </location>
</feature>
<feature type="strand" evidence="2">
    <location>
        <begin position="311"/>
        <end position="314"/>
    </location>
</feature>
<feature type="turn" evidence="2">
    <location>
        <begin position="315"/>
        <end position="318"/>
    </location>
</feature>
<feature type="strand" evidence="2">
    <location>
        <begin position="319"/>
        <end position="321"/>
    </location>
</feature>
<feature type="helix" evidence="2">
    <location>
        <begin position="324"/>
        <end position="327"/>
    </location>
</feature>
<feature type="turn" evidence="2">
    <location>
        <begin position="328"/>
        <end position="330"/>
    </location>
</feature>
<feature type="helix" evidence="2">
    <location>
        <begin position="333"/>
        <end position="351"/>
    </location>
</feature>
<gene>
    <name evidence="1" type="primary">prfA</name>
    <name type="ordered locus">TT_C1577</name>
</gene>
<accession>Q72HB8</accession>
<name>RF1_THET2</name>
<proteinExistence type="evidence at protein level"/>
<organism>
    <name type="scientific">Thermus thermophilus (strain ATCC BAA-163 / DSM 7039 / HB27)</name>
    <dbReference type="NCBI Taxonomy" id="262724"/>
    <lineage>
        <taxon>Bacteria</taxon>
        <taxon>Thermotogati</taxon>
        <taxon>Deinococcota</taxon>
        <taxon>Deinococci</taxon>
        <taxon>Thermales</taxon>
        <taxon>Thermaceae</taxon>
        <taxon>Thermus</taxon>
    </lineage>
</organism>
<protein>
    <recommendedName>
        <fullName evidence="1">Peptide chain release factor 1</fullName>
        <shortName evidence="1">RF-1</shortName>
    </recommendedName>
</protein>
<sequence length="354" mass="40093">MLDKLDRLEEEYRELEALLSDPEVLKDKGRYQSLSRRYAEMGEVIGLIREYRKVLEDLEQAESLLDDPELKEMAKAEREALLARKEALEKELERHLLPKDPMDERDAIVEIRAGTGGEEAALFARDLFNMYLRFAEEMGFETEVLDSHPTDLGGFSKVVFEVRGPGAYGTFKYESGVHRVQRVPVTETQGRIHTSTATVAVLPKAEEEDFALNMDEIRIDVMRASGPGGQGVNTTDSAVRVVHLPTGIMVTCQDSRSQIKNREKALMILRSRLLEMKRAEEAERLRKTRLAQIGTGERSEKIRTYNFPQSRVTDHRIGFTTHDLEGVLSGHLTPILEALKRADQERQLAALAEG</sequence>
<evidence type="ECO:0000255" key="1">
    <source>
        <dbReference type="HAMAP-Rule" id="MF_00093"/>
    </source>
</evidence>
<evidence type="ECO:0007829" key="2">
    <source>
        <dbReference type="PDB" id="4V63"/>
    </source>
</evidence>
<dbReference type="EMBL" id="AE017221">
    <property type="protein sequence ID" value="AAS81919.1"/>
    <property type="molecule type" value="Genomic_DNA"/>
</dbReference>
<dbReference type="RefSeq" id="WP_011173949.1">
    <property type="nucleotide sequence ID" value="NC_005835.1"/>
</dbReference>
<dbReference type="PDB" id="4V63">
    <property type="method" value="X-ray"/>
    <property type="resolution" value="3.21 A"/>
    <property type="chains" value="AX/CX=1-354"/>
</dbReference>
<dbReference type="PDB" id="4V7P">
    <property type="method" value="X-ray"/>
    <property type="resolution" value="3.62 A"/>
    <property type="chains" value="AV/DV=1-354"/>
</dbReference>
<dbReference type="PDBsum" id="4V63"/>
<dbReference type="PDBsum" id="4V7P"/>
<dbReference type="SMR" id="Q72HB8"/>
<dbReference type="IntAct" id="Q72HB8">
    <property type="interactions" value="49"/>
</dbReference>
<dbReference type="GeneID" id="3169506"/>
<dbReference type="KEGG" id="tth:TT_C1577"/>
<dbReference type="eggNOG" id="COG0216">
    <property type="taxonomic scope" value="Bacteria"/>
</dbReference>
<dbReference type="HOGENOM" id="CLU_036856_0_1_0"/>
<dbReference type="OrthoDB" id="9806673at2"/>
<dbReference type="Proteomes" id="UP000000592">
    <property type="component" value="Chromosome"/>
</dbReference>
<dbReference type="GO" id="GO:0005737">
    <property type="term" value="C:cytoplasm"/>
    <property type="evidence" value="ECO:0007669"/>
    <property type="project" value="UniProtKB-SubCell"/>
</dbReference>
<dbReference type="GO" id="GO:0016149">
    <property type="term" value="F:translation release factor activity, codon specific"/>
    <property type="evidence" value="ECO:0007669"/>
    <property type="project" value="UniProtKB-UniRule"/>
</dbReference>
<dbReference type="FunFam" id="3.30.160.20:FF:000004">
    <property type="entry name" value="Peptide chain release factor 1"/>
    <property type="match status" value="1"/>
</dbReference>
<dbReference type="FunFam" id="3.30.70.1660:FF:000002">
    <property type="entry name" value="Peptide chain release factor 1"/>
    <property type="match status" value="1"/>
</dbReference>
<dbReference type="Gene3D" id="3.30.160.20">
    <property type="match status" value="1"/>
</dbReference>
<dbReference type="Gene3D" id="3.30.70.1660">
    <property type="match status" value="2"/>
</dbReference>
<dbReference type="Gene3D" id="6.10.140.1950">
    <property type="match status" value="1"/>
</dbReference>
<dbReference type="HAMAP" id="MF_00093">
    <property type="entry name" value="Rel_fac_1"/>
    <property type="match status" value="1"/>
</dbReference>
<dbReference type="InterPro" id="IPR005139">
    <property type="entry name" value="PCRF"/>
</dbReference>
<dbReference type="InterPro" id="IPR000352">
    <property type="entry name" value="Pep_chain_release_fac_I"/>
</dbReference>
<dbReference type="InterPro" id="IPR045853">
    <property type="entry name" value="Pep_chain_release_fac_I_sf"/>
</dbReference>
<dbReference type="InterPro" id="IPR050057">
    <property type="entry name" value="Prokaryotic/Mito_RF"/>
</dbReference>
<dbReference type="InterPro" id="IPR004373">
    <property type="entry name" value="RF-1"/>
</dbReference>
<dbReference type="NCBIfam" id="TIGR00019">
    <property type="entry name" value="prfA"/>
    <property type="match status" value="1"/>
</dbReference>
<dbReference type="NCBIfam" id="NF001859">
    <property type="entry name" value="PRK00591.1"/>
    <property type="match status" value="1"/>
</dbReference>
<dbReference type="PANTHER" id="PTHR43804">
    <property type="entry name" value="LD18447P"/>
    <property type="match status" value="1"/>
</dbReference>
<dbReference type="PANTHER" id="PTHR43804:SF7">
    <property type="entry name" value="LD18447P"/>
    <property type="match status" value="1"/>
</dbReference>
<dbReference type="Pfam" id="PF03462">
    <property type="entry name" value="PCRF"/>
    <property type="match status" value="1"/>
</dbReference>
<dbReference type="Pfam" id="PF00472">
    <property type="entry name" value="RF-1"/>
    <property type="match status" value="1"/>
</dbReference>
<dbReference type="SMART" id="SM00937">
    <property type="entry name" value="PCRF"/>
    <property type="match status" value="1"/>
</dbReference>
<dbReference type="SUPFAM" id="SSF75620">
    <property type="entry name" value="Release factor"/>
    <property type="match status" value="1"/>
</dbReference>
<dbReference type="PROSITE" id="PS00745">
    <property type="entry name" value="RF_PROK_I"/>
    <property type="match status" value="1"/>
</dbReference>
<reference key="1">
    <citation type="journal article" date="2004" name="Nat. Biotechnol.">
        <title>The genome sequence of the extreme thermophile Thermus thermophilus.</title>
        <authorList>
            <person name="Henne A."/>
            <person name="Brueggemann H."/>
            <person name="Raasch C."/>
            <person name="Wiezer A."/>
            <person name="Hartsch T."/>
            <person name="Liesegang H."/>
            <person name="Johann A."/>
            <person name="Lienard T."/>
            <person name="Gohl O."/>
            <person name="Martinez-Arias R."/>
            <person name="Jacobi C."/>
            <person name="Starkuviene V."/>
            <person name="Schlenczeck S."/>
            <person name="Dencker S."/>
            <person name="Huber R."/>
            <person name="Klenk H.-P."/>
            <person name="Kramer W."/>
            <person name="Merkl R."/>
            <person name="Gottschalk G."/>
            <person name="Fritz H.-J."/>
        </authorList>
    </citation>
    <scope>NUCLEOTIDE SEQUENCE [LARGE SCALE GENOMIC DNA]</scope>
    <source>
        <strain>ATCC BAA-163 / DSM 7039 / HB27</strain>
    </source>
</reference>